<protein>
    <recommendedName>
        <fullName evidence="1">Peptidase T</fullName>
        <ecNumber evidence="1">3.4.11.4</ecNumber>
    </recommendedName>
    <alternativeName>
        <fullName evidence="1">Aminotripeptidase</fullName>
        <shortName evidence="1">Tripeptidase</shortName>
    </alternativeName>
    <alternativeName>
        <fullName evidence="1">Tripeptide aminopeptidase</fullName>
    </alternativeName>
</protein>
<feature type="chain" id="PRO_0000185307" description="Peptidase T">
    <location>
        <begin position="1"/>
        <end position="412"/>
    </location>
</feature>
<feature type="active site" evidence="1">
    <location>
        <position position="86"/>
    </location>
</feature>
<feature type="active site" description="Proton acceptor" evidence="1">
    <location>
        <position position="179"/>
    </location>
</feature>
<feature type="binding site" evidence="1">
    <location>
        <position position="84"/>
    </location>
    <ligand>
        <name>Zn(2+)</name>
        <dbReference type="ChEBI" id="CHEBI:29105"/>
        <label>1</label>
    </ligand>
</feature>
<feature type="binding site" evidence="1">
    <location>
        <position position="146"/>
    </location>
    <ligand>
        <name>Zn(2+)</name>
        <dbReference type="ChEBI" id="CHEBI:29105"/>
        <label>1</label>
    </ligand>
</feature>
<feature type="binding site" evidence="1">
    <location>
        <position position="146"/>
    </location>
    <ligand>
        <name>Zn(2+)</name>
        <dbReference type="ChEBI" id="CHEBI:29105"/>
        <label>2</label>
    </ligand>
</feature>
<feature type="binding site" evidence="1">
    <location>
        <position position="180"/>
    </location>
    <ligand>
        <name>Zn(2+)</name>
        <dbReference type="ChEBI" id="CHEBI:29105"/>
        <label>2</label>
    </ligand>
</feature>
<feature type="binding site" evidence="1">
    <location>
        <position position="202"/>
    </location>
    <ligand>
        <name>Zn(2+)</name>
        <dbReference type="ChEBI" id="CHEBI:29105"/>
        <label>1</label>
    </ligand>
</feature>
<feature type="binding site" evidence="1">
    <location>
        <position position="385"/>
    </location>
    <ligand>
        <name>Zn(2+)</name>
        <dbReference type="ChEBI" id="CHEBI:29105"/>
        <label>2</label>
    </ligand>
</feature>
<keyword id="KW-0031">Aminopeptidase</keyword>
<keyword id="KW-0963">Cytoplasm</keyword>
<keyword id="KW-0378">Hydrolase</keyword>
<keyword id="KW-0479">Metal-binding</keyword>
<keyword id="KW-0482">Metalloprotease</keyword>
<keyword id="KW-0645">Protease</keyword>
<keyword id="KW-1185">Reference proteome</keyword>
<keyword id="KW-0862">Zinc</keyword>
<dbReference type="EC" id="3.4.11.4" evidence="1"/>
<dbReference type="EMBL" id="AE004439">
    <property type="protein sequence ID" value="AAK02349.1"/>
    <property type="molecule type" value="Genomic_DNA"/>
</dbReference>
<dbReference type="RefSeq" id="WP_005751194.1">
    <property type="nucleotide sequence ID" value="NC_002663.1"/>
</dbReference>
<dbReference type="SMR" id="Q9CP05"/>
<dbReference type="STRING" id="272843.PM0265"/>
<dbReference type="MEROPS" id="M20.003"/>
<dbReference type="EnsemblBacteria" id="AAK02349">
    <property type="protein sequence ID" value="AAK02349"/>
    <property type="gene ID" value="PM0265"/>
</dbReference>
<dbReference type="KEGG" id="pmu:PM0265"/>
<dbReference type="PATRIC" id="fig|272843.6.peg.273"/>
<dbReference type="HOGENOM" id="CLU_053676_0_0_6"/>
<dbReference type="OrthoDB" id="9804934at2"/>
<dbReference type="Proteomes" id="UP000000809">
    <property type="component" value="Chromosome"/>
</dbReference>
<dbReference type="GO" id="GO:0005829">
    <property type="term" value="C:cytosol"/>
    <property type="evidence" value="ECO:0007669"/>
    <property type="project" value="TreeGrafter"/>
</dbReference>
<dbReference type="GO" id="GO:0008237">
    <property type="term" value="F:metallopeptidase activity"/>
    <property type="evidence" value="ECO:0007669"/>
    <property type="project" value="UniProtKB-KW"/>
</dbReference>
<dbReference type="GO" id="GO:0045148">
    <property type="term" value="F:tripeptide aminopeptidase activity"/>
    <property type="evidence" value="ECO:0007669"/>
    <property type="project" value="UniProtKB-UniRule"/>
</dbReference>
<dbReference type="GO" id="GO:0008270">
    <property type="term" value="F:zinc ion binding"/>
    <property type="evidence" value="ECO:0007669"/>
    <property type="project" value="UniProtKB-UniRule"/>
</dbReference>
<dbReference type="GO" id="GO:0043171">
    <property type="term" value="P:peptide catabolic process"/>
    <property type="evidence" value="ECO:0007669"/>
    <property type="project" value="UniProtKB-UniRule"/>
</dbReference>
<dbReference type="GO" id="GO:0006508">
    <property type="term" value="P:proteolysis"/>
    <property type="evidence" value="ECO:0007669"/>
    <property type="project" value="UniProtKB-UniRule"/>
</dbReference>
<dbReference type="CDD" id="cd03892">
    <property type="entry name" value="M20_peptT"/>
    <property type="match status" value="1"/>
</dbReference>
<dbReference type="Gene3D" id="3.30.70.360">
    <property type="match status" value="1"/>
</dbReference>
<dbReference type="Gene3D" id="3.40.630.10">
    <property type="entry name" value="Zn peptidases"/>
    <property type="match status" value="1"/>
</dbReference>
<dbReference type="HAMAP" id="MF_00550">
    <property type="entry name" value="Aminopeptidase_M20"/>
    <property type="match status" value="1"/>
</dbReference>
<dbReference type="InterPro" id="IPR001261">
    <property type="entry name" value="ArgE/DapE_CS"/>
</dbReference>
<dbReference type="InterPro" id="IPR036264">
    <property type="entry name" value="Bact_exopeptidase_dim_dom"/>
</dbReference>
<dbReference type="InterPro" id="IPR002933">
    <property type="entry name" value="Peptidase_M20"/>
</dbReference>
<dbReference type="InterPro" id="IPR011650">
    <property type="entry name" value="Peptidase_M20_dimer"/>
</dbReference>
<dbReference type="InterPro" id="IPR010161">
    <property type="entry name" value="Peptidase_M20B"/>
</dbReference>
<dbReference type="NCBIfam" id="TIGR01882">
    <property type="entry name" value="peptidase-T"/>
    <property type="match status" value="1"/>
</dbReference>
<dbReference type="NCBIfam" id="NF003976">
    <property type="entry name" value="PRK05469.1"/>
    <property type="match status" value="1"/>
</dbReference>
<dbReference type="NCBIfam" id="NF009920">
    <property type="entry name" value="PRK13381.1"/>
    <property type="match status" value="1"/>
</dbReference>
<dbReference type="PANTHER" id="PTHR42994">
    <property type="entry name" value="PEPTIDASE T"/>
    <property type="match status" value="1"/>
</dbReference>
<dbReference type="PANTHER" id="PTHR42994:SF1">
    <property type="entry name" value="PEPTIDASE T"/>
    <property type="match status" value="1"/>
</dbReference>
<dbReference type="Pfam" id="PF07687">
    <property type="entry name" value="M20_dimer"/>
    <property type="match status" value="1"/>
</dbReference>
<dbReference type="Pfam" id="PF01546">
    <property type="entry name" value="Peptidase_M20"/>
    <property type="match status" value="1"/>
</dbReference>
<dbReference type="PIRSF" id="PIRSF037215">
    <property type="entry name" value="Peptidase_M20B"/>
    <property type="match status" value="1"/>
</dbReference>
<dbReference type="SUPFAM" id="SSF55031">
    <property type="entry name" value="Bacterial exopeptidase dimerisation domain"/>
    <property type="match status" value="1"/>
</dbReference>
<dbReference type="SUPFAM" id="SSF53187">
    <property type="entry name" value="Zn-dependent exopeptidases"/>
    <property type="match status" value="1"/>
</dbReference>
<dbReference type="PROSITE" id="PS00758">
    <property type="entry name" value="ARGE_DAPE_CPG2_1"/>
    <property type="match status" value="1"/>
</dbReference>
<dbReference type="PROSITE" id="PS00759">
    <property type="entry name" value="ARGE_DAPE_CPG2_2"/>
    <property type="match status" value="1"/>
</dbReference>
<accession>Q9CP05</accession>
<sequence>MLNQQQTYKLLERFLHYTTYDTQSKSGAKISPSSAGQLKLAKHLQQELFALGLQDIDISKHSVVTAFLPSNVNPHSPTIGFIAHLDTATQCSGKNVQAEVIENYRGGDIALGVGEEFISPAHYQFLHQLIGKTLVVADGNTLLGADNKAGIAEIMTALAVLKEENLPHCNIRVAFTPDEEIGLGMQFFPVEKFPCDWAYTIDGGEVGELEYENFNAATAIVTIEGVNMHTGSAKDKMINALTLACEFQQGFPAEETPEQTEGKQGFYHLSHFTGHVEKVELQYLIRDFDRDGFEQRKIFIQQLVDRFNQQKRLKKPITLEIKDSYKNMNEVVKTVPQSVELADSAMRECGIEPIHKAIRGGTDGAWLAEQGLACPNVFTGGYNFHSKHELITLEGMQSAVNVITTIVRLATS</sequence>
<evidence type="ECO:0000255" key="1">
    <source>
        <dbReference type="HAMAP-Rule" id="MF_00550"/>
    </source>
</evidence>
<proteinExistence type="inferred from homology"/>
<organism>
    <name type="scientific">Pasteurella multocida (strain Pm70)</name>
    <dbReference type="NCBI Taxonomy" id="272843"/>
    <lineage>
        <taxon>Bacteria</taxon>
        <taxon>Pseudomonadati</taxon>
        <taxon>Pseudomonadota</taxon>
        <taxon>Gammaproteobacteria</taxon>
        <taxon>Pasteurellales</taxon>
        <taxon>Pasteurellaceae</taxon>
        <taxon>Pasteurella</taxon>
    </lineage>
</organism>
<gene>
    <name evidence="1" type="primary">pepT</name>
    <name type="ordered locus">PM0265</name>
</gene>
<name>PEPT_PASMU</name>
<comment type="function">
    <text evidence="1">Cleaves the N-terminal amino acid of tripeptides.</text>
</comment>
<comment type="catalytic activity">
    <reaction evidence="1">
        <text>Release of the N-terminal residue from a tripeptide.</text>
        <dbReference type="EC" id="3.4.11.4"/>
    </reaction>
</comment>
<comment type="cofactor">
    <cofactor evidence="1">
        <name>Zn(2+)</name>
        <dbReference type="ChEBI" id="CHEBI:29105"/>
    </cofactor>
    <text evidence="1">Binds 2 Zn(2+) ions per subunit.</text>
</comment>
<comment type="subcellular location">
    <subcellularLocation>
        <location evidence="1">Cytoplasm</location>
    </subcellularLocation>
</comment>
<comment type="similarity">
    <text evidence="1">Belongs to the peptidase M20B family.</text>
</comment>
<reference key="1">
    <citation type="journal article" date="2001" name="Proc. Natl. Acad. Sci. U.S.A.">
        <title>Complete genomic sequence of Pasteurella multocida Pm70.</title>
        <authorList>
            <person name="May B.J."/>
            <person name="Zhang Q."/>
            <person name="Li L.L."/>
            <person name="Paustian M.L."/>
            <person name="Whittam T.S."/>
            <person name="Kapur V."/>
        </authorList>
    </citation>
    <scope>NUCLEOTIDE SEQUENCE [LARGE SCALE GENOMIC DNA]</scope>
    <source>
        <strain>Pm70</strain>
    </source>
</reference>